<organism>
    <name type="scientific">Desulforamulus reducens (strain ATCC BAA-1160 / DSM 100696 / MI-1)</name>
    <name type="common">Desulfotomaculum reducens</name>
    <dbReference type="NCBI Taxonomy" id="349161"/>
    <lineage>
        <taxon>Bacteria</taxon>
        <taxon>Bacillati</taxon>
        <taxon>Bacillota</taxon>
        <taxon>Clostridia</taxon>
        <taxon>Eubacteriales</taxon>
        <taxon>Peptococcaceae</taxon>
        <taxon>Desulforamulus</taxon>
    </lineage>
</organism>
<gene>
    <name evidence="1" type="primary">murC</name>
    <name type="ordered locus">Dred_0676</name>
</gene>
<comment type="function">
    <text evidence="1">Cell wall formation.</text>
</comment>
<comment type="catalytic activity">
    <reaction evidence="1">
        <text>UDP-N-acetyl-alpha-D-muramate + L-alanine + ATP = UDP-N-acetyl-alpha-D-muramoyl-L-alanine + ADP + phosphate + H(+)</text>
        <dbReference type="Rhea" id="RHEA:23372"/>
        <dbReference type="ChEBI" id="CHEBI:15378"/>
        <dbReference type="ChEBI" id="CHEBI:30616"/>
        <dbReference type="ChEBI" id="CHEBI:43474"/>
        <dbReference type="ChEBI" id="CHEBI:57972"/>
        <dbReference type="ChEBI" id="CHEBI:70757"/>
        <dbReference type="ChEBI" id="CHEBI:83898"/>
        <dbReference type="ChEBI" id="CHEBI:456216"/>
        <dbReference type="EC" id="6.3.2.8"/>
    </reaction>
</comment>
<comment type="pathway">
    <text evidence="1">Cell wall biogenesis; peptidoglycan biosynthesis.</text>
</comment>
<comment type="subcellular location">
    <subcellularLocation>
        <location evidence="1">Cytoplasm</location>
    </subcellularLocation>
</comment>
<comment type="similarity">
    <text evidence="1">Belongs to the MurCDEF family.</text>
</comment>
<dbReference type="EC" id="6.3.2.8" evidence="1"/>
<dbReference type="EMBL" id="CP000612">
    <property type="protein sequence ID" value="ABO49215.1"/>
    <property type="molecule type" value="Genomic_DNA"/>
</dbReference>
<dbReference type="RefSeq" id="WP_011877051.1">
    <property type="nucleotide sequence ID" value="NC_009253.1"/>
</dbReference>
<dbReference type="SMR" id="A4J2B2"/>
<dbReference type="STRING" id="349161.Dred_0676"/>
<dbReference type="KEGG" id="drm:Dred_0676"/>
<dbReference type="eggNOG" id="COG0773">
    <property type="taxonomic scope" value="Bacteria"/>
</dbReference>
<dbReference type="HOGENOM" id="CLU_028104_2_2_9"/>
<dbReference type="UniPathway" id="UPA00219"/>
<dbReference type="Proteomes" id="UP000001556">
    <property type="component" value="Chromosome"/>
</dbReference>
<dbReference type="GO" id="GO:0005737">
    <property type="term" value="C:cytoplasm"/>
    <property type="evidence" value="ECO:0007669"/>
    <property type="project" value="UniProtKB-SubCell"/>
</dbReference>
<dbReference type="GO" id="GO:0005524">
    <property type="term" value="F:ATP binding"/>
    <property type="evidence" value="ECO:0007669"/>
    <property type="project" value="UniProtKB-UniRule"/>
</dbReference>
<dbReference type="GO" id="GO:0008763">
    <property type="term" value="F:UDP-N-acetylmuramate-L-alanine ligase activity"/>
    <property type="evidence" value="ECO:0007669"/>
    <property type="project" value="UniProtKB-UniRule"/>
</dbReference>
<dbReference type="GO" id="GO:0051301">
    <property type="term" value="P:cell division"/>
    <property type="evidence" value="ECO:0007669"/>
    <property type="project" value="UniProtKB-KW"/>
</dbReference>
<dbReference type="GO" id="GO:0071555">
    <property type="term" value="P:cell wall organization"/>
    <property type="evidence" value="ECO:0007669"/>
    <property type="project" value="UniProtKB-KW"/>
</dbReference>
<dbReference type="GO" id="GO:0009252">
    <property type="term" value="P:peptidoglycan biosynthetic process"/>
    <property type="evidence" value="ECO:0007669"/>
    <property type="project" value="UniProtKB-UniRule"/>
</dbReference>
<dbReference type="GO" id="GO:0008360">
    <property type="term" value="P:regulation of cell shape"/>
    <property type="evidence" value="ECO:0007669"/>
    <property type="project" value="UniProtKB-KW"/>
</dbReference>
<dbReference type="Gene3D" id="3.90.190.20">
    <property type="entry name" value="Mur ligase, C-terminal domain"/>
    <property type="match status" value="1"/>
</dbReference>
<dbReference type="Gene3D" id="3.40.1190.10">
    <property type="entry name" value="Mur-like, catalytic domain"/>
    <property type="match status" value="1"/>
</dbReference>
<dbReference type="Gene3D" id="3.40.50.720">
    <property type="entry name" value="NAD(P)-binding Rossmann-like Domain"/>
    <property type="match status" value="1"/>
</dbReference>
<dbReference type="HAMAP" id="MF_00046">
    <property type="entry name" value="MurC"/>
    <property type="match status" value="1"/>
</dbReference>
<dbReference type="InterPro" id="IPR036565">
    <property type="entry name" value="Mur-like_cat_sf"/>
</dbReference>
<dbReference type="InterPro" id="IPR004101">
    <property type="entry name" value="Mur_ligase_C"/>
</dbReference>
<dbReference type="InterPro" id="IPR036615">
    <property type="entry name" value="Mur_ligase_C_dom_sf"/>
</dbReference>
<dbReference type="InterPro" id="IPR013221">
    <property type="entry name" value="Mur_ligase_cen"/>
</dbReference>
<dbReference type="InterPro" id="IPR000713">
    <property type="entry name" value="Mur_ligase_N"/>
</dbReference>
<dbReference type="InterPro" id="IPR050061">
    <property type="entry name" value="MurCDEF_pg_biosynth"/>
</dbReference>
<dbReference type="InterPro" id="IPR005758">
    <property type="entry name" value="UDP-N-AcMur_Ala_ligase_MurC"/>
</dbReference>
<dbReference type="NCBIfam" id="TIGR01082">
    <property type="entry name" value="murC"/>
    <property type="match status" value="1"/>
</dbReference>
<dbReference type="PANTHER" id="PTHR43445:SF3">
    <property type="entry name" value="UDP-N-ACETYLMURAMATE--L-ALANINE LIGASE"/>
    <property type="match status" value="1"/>
</dbReference>
<dbReference type="PANTHER" id="PTHR43445">
    <property type="entry name" value="UDP-N-ACETYLMURAMATE--L-ALANINE LIGASE-RELATED"/>
    <property type="match status" value="1"/>
</dbReference>
<dbReference type="Pfam" id="PF01225">
    <property type="entry name" value="Mur_ligase"/>
    <property type="match status" value="1"/>
</dbReference>
<dbReference type="Pfam" id="PF02875">
    <property type="entry name" value="Mur_ligase_C"/>
    <property type="match status" value="1"/>
</dbReference>
<dbReference type="Pfam" id="PF08245">
    <property type="entry name" value="Mur_ligase_M"/>
    <property type="match status" value="1"/>
</dbReference>
<dbReference type="SUPFAM" id="SSF51984">
    <property type="entry name" value="MurCD N-terminal domain"/>
    <property type="match status" value="1"/>
</dbReference>
<dbReference type="SUPFAM" id="SSF53623">
    <property type="entry name" value="MurD-like peptide ligases, catalytic domain"/>
    <property type="match status" value="1"/>
</dbReference>
<dbReference type="SUPFAM" id="SSF53244">
    <property type="entry name" value="MurD-like peptide ligases, peptide-binding domain"/>
    <property type="match status" value="1"/>
</dbReference>
<accession>A4J2B2</accession>
<name>MURC_DESRM</name>
<evidence type="ECO:0000255" key="1">
    <source>
        <dbReference type="HAMAP-Rule" id="MF_00046"/>
    </source>
</evidence>
<protein>
    <recommendedName>
        <fullName evidence="1">UDP-N-acetylmuramate--L-alanine ligase</fullName>
        <ecNumber evidence="1">6.3.2.8</ecNumber>
    </recommendedName>
    <alternativeName>
        <fullName evidence="1">UDP-N-acetylmuramoyl-L-alanine synthetase</fullName>
    </alternativeName>
</protein>
<proteinExistence type="inferred from homology"/>
<keyword id="KW-0067">ATP-binding</keyword>
<keyword id="KW-0131">Cell cycle</keyword>
<keyword id="KW-0132">Cell division</keyword>
<keyword id="KW-0133">Cell shape</keyword>
<keyword id="KW-0961">Cell wall biogenesis/degradation</keyword>
<keyword id="KW-0963">Cytoplasm</keyword>
<keyword id="KW-0436">Ligase</keyword>
<keyword id="KW-0547">Nucleotide-binding</keyword>
<keyword id="KW-0573">Peptidoglycan synthesis</keyword>
<keyword id="KW-1185">Reference proteome</keyword>
<reference key="1">
    <citation type="submission" date="2007-03" db="EMBL/GenBank/DDBJ databases">
        <title>Complete sequence of Desulfotomaculum reducens MI-1.</title>
        <authorList>
            <consortium name="US DOE Joint Genome Institute"/>
            <person name="Copeland A."/>
            <person name="Lucas S."/>
            <person name="Lapidus A."/>
            <person name="Barry K."/>
            <person name="Detter J.C."/>
            <person name="Glavina del Rio T."/>
            <person name="Hammon N."/>
            <person name="Israni S."/>
            <person name="Dalin E."/>
            <person name="Tice H."/>
            <person name="Pitluck S."/>
            <person name="Sims D."/>
            <person name="Brettin T."/>
            <person name="Bruce D."/>
            <person name="Han C."/>
            <person name="Tapia R."/>
            <person name="Schmutz J."/>
            <person name="Larimer F."/>
            <person name="Land M."/>
            <person name="Hauser L."/>
            <person name="Kyrpides N."/>
            <person name="Kim E."/>
            <person name="Tebo B.M."/>
            <person name="Richardson P."/>
        </authorList>
    </citation>
    <scope>NUCLEOTIDE SEQUENCE [LARGE SCALE GENOMIC DNA]</scope>
    <source>
        <strain>ATCC BAA-1160 / DSM 100696 / MI-1</strain>
    </source>
</reference>
<feature type="chain" id="PRO_0000336830" description="UDP-N-acetylmuramate--L-alanine ligase">
    <location>
        <begin position="1"/>
        <end position="462"/>
    </location>
</feature>
<feature type="binding site" evidence="1">
    <location>
        <begin position="116"/>
        <end position="122"/>
    </location>
    <ligand>
        <name>ATP</name>
        <dbReference type="ChEBI" id="CHEBI:30616"/>
    </ligand>
</feature>
<sequence>MQLQGKDKKVHFIGIGGAGMSGIATVMLEMGGYQVSGSDIKRSAVIDRLENLGAKCNIGHKTSNINNEIDAVVYSTAISPENPEILETQRLGIPLIRRGQMLARLMKEKKGIAVAGAHGKTTTTSMTALILEENSFDPTIIIGGDLSNIGGNAKLGQGEYMVAEADESDGSFLLLDPNIAVVTNIEDDHLDYYGTRENIAKAFRQFLAKLSAEGLAVICLDDPVLKEITTGLTCQVVTYGSLGSGADYQIKVLETRNGVNQGEVYFQEERLGMLELHVPGYHNLLNAMAAVAIGRHLNLDFEKIARALRKFTGAKRRFQVIGKVNGITVVDDYAHHPTEVKATLQAARTSHPGRIVTIFQPHRYSRTKQLFKEFGQSFTNGDLIILTDIYAASELPLEGVHTKLILDAIPLQEGQQVLYLPTLKDAADYLADYANPGDLVLTMGAGDVWTLGRELIKRLEEK</sequence>